<accession>Q6R7E7</accession>
<name>Y082_OSHVF</name>
<gene>
    <name type="ORF">ORF82</name>
</gene>
<proteinExistence type="predicted"/>
<organismHost>
    <name type="scientific">Magallana gigas</name>
    <name type="common">Pacific oyster</name>
    <name type="synonym">Crassostrea gigas</name>
    <dbReference type="NCBI Taxonomy" id="29159"/>
</organismHost>
<organismHost>
    <name type="scientific">Pecten maximus</name>
    <name type="common">King scallop</name>
    <name type="synonym">Pilgrim's clam</name>
    <dbReference type="NCBI Taxonomy" id="6579"/>
</organismHost>
<protein>
    <recommendedName>
        <fullName>Uncharacterized protein ORF82</fullName>
    </recommendedName>
</protein>
<dbReference type="EMBL" id="AY509253">
    <property type="protein sequence ID" value="AAS00968.1"/>
    <property type="molecule type" value="Genomic_DNA"/>
</dbReference>
<dbReference type="RefSeq" id="YP_024621.1">
    <property type="nucleotide sequence ID" value="NC_005881.2"/>
</dbReference>
<dbReference type="KEGG" id="vg:2948232"/>
<dbReference type="Proteomes" id="UP000007021">
    <property type="component" value="Segment"/>
</dbReference>
<keyword id="KW-1185">Reference proteome</keyword>
<sequence>MENGLNGTFVLKTAAGANIIGHTAQFDHGINIHWMKDLLRCKAIKPGVLANKGVINTSAYPVTIYNTGTTDLHINDKLWVLPPLTDKAMQTTMFEGNVFPPEVYEKTFIQAELSQFIDDMILLHELSTAVPLKKVNTESVAEKNFSTALGVKALGDQLSSNFFWKRLVAAYYNHNRYSTPEEVKLGIFRFISKNWIMHLIESPKGTSSRYNNLFKSWSAVGANFTLHPSQEFDTMEGASKSEEYLKNIFFMRSFLTAIKHAANTWVEFKMPTVGTITGAKETHIRPNHDFSLTLTM</sequence>
<reference key="1">
    <citation type="journal article" date="2005" name="J. Gen. Virol.">
        <title>A novel class of herpesvirus with bivalve hosts.</title>
        <authorList>
            <person name="Davison A.J."/>
            <person name="Trus B.L."/>
            <person name="Cheng N."/>
            <person name="Steven A.C."/>
            <person name="Watson M.S."/>
            <person name="Cunningham C."/>
            <person name="Le Deuff R.M."/>
            <person name="Renault T."/>
        </authorList>
    </citation>
    <scope>NUCLEOTIDE SEQUENCE [LARGE SCALE GENOMIC DNA]</scope>
</reference>
<feature type="chain" id="PRO_0000385103" description="Uncharacterized protein ORF82">
    <location>
        <begin position="1"/>
        <end position="296"/>
    </location>
</feature>
<organism>
    <name type="scientific">Ostreid herpesvirus 1 (isolate France)</name>
    <name type="common">OsHV-1</name>
    <name type="synonym">Pacific oyster herpesvirus</name>
    <dbReference type="NCBI Taxonomy" id="654903"/>
    <lineage>
        <taxon>Viruses</taxon>
        <taxon>Duplodnaviria</taxon>
        <taxon>Heunggongvirae</taxon>
        <taxon>Peploviricota</taxon>
        <taxon>Herviviricetes</taxon>
        <taxon>Herpesvirales</taxon>
        <taxon>Malacoherpesviridae</taxon>
        <taxon>Ostreavirus</taxon>
        <taxon>Ostreavirus ostreidmalaco1</taxon>
        <taxon>Ostreid herpesvirus 1</taxon>
    </lineage>
</organism>